<reference key="1">
    <citation type="journal article" date="1991" name="Biochem. Biophys. Res. Commun.">
        <title>Molecular cloning, structural characterization and functional expression of the human substance P receptor.</title>
        <authorList>
            <person name="Takeda Y."/>
            <person name="Chou K.B."/>
            <person name="Takeda J."/>
            <person name="Sachais B.S."/>
            <person name="Krause J.E."/>
        </authorList>
    </citation>
    <scope>NUCLEOTIDE SEQUENCE [MRNA] (ISOFORM 1)</scope>
</reference>
<reference key="2">
    <citation type="journal article" date="1991" name="Biochem. Biophys. Res. Commun.">
        <title>Isolation and characterisation of the human lung NK-1 receptor cDNA.</title>
        <authorList>
            <person name="Hopkins B."/>
            <person name="Powell S.J."/>
            <person name="Danks P."/>
            <person name="Briggs I."/>
            <person name="Graham A."/>
        </authorList>
    </citation>
    <scope>NUCLEOTIDE SEQUENCE [MRNA] (ISOFORM 1)</scope>
    <source>
        <tissue>Lung</tissue>
    </source>
</reference>
<reference key="3">
    <citation type="journal article" date="1991" name="Biochemistry">
        <title>Human substance P receptor (NK-1): organization of the gene, chromosome localization, and functional expression of cDNA clones.</title>
        <authorList>
            <person name="Gerard N.P."/>
            <person name="Garraway L.A."/>
            <person name="Eddy R.L. Jr."/>
            <person name="Shows T.B."/>
            <person name="Iijima H."/>
            <person name="Paquet J.L."/>
            <person name="Gerard C."/>
        </authorList>
    </citation>
    <scope>NUCLEOTIDE SEQUENCE [MRNA] (ISOFORM 1)</scope>
</reference>
<reference key="4">
    <citation type="journal article" date="1992" name="Eur. J. Biochem.">
        <title>The primary structure and gene organization of human substance P and neuromedin K receptors.</title>
        <authorList>
            <person name="Takahashi K."/>
            <person name="Tanaka A."/>
            <person name="Hara M."/>
            <person name="Nakanishi S."/>
        </authorList>
    </citation>
    <scope>NUCLEOTIDE SEQUENCE [GENOMIC DNA] (ISOFORM 1)</scope>
    <source>
        <tissue>Placenta</tissue>
    </source>
</reference>
<reference key="5">
    <citation type="journal article" date="1992" name="Mol. Pharmacol.">
        <title>Differential activation of intracellular effector by two isoforms of human neurokinin-1 receptor.</title>
        <authorList>
            <person name="Fong T.M."/>
            <person name="Anderson S.A."/>
            <person name="Yu H."/>
            <person name="Huang R.-R.C."/>
            <person name="Strader C.D."/>
        </authorList>
    </citation>
    <scope>NUCLEOTIDE SEQUENCE [MRNA] (ISOFORMS 1 AND 2)</scope>
</reference>
<reference key="6">
    <citation type="submission" date="2003-11" db="EMBL/GenBank/DDBJ databases">
        <title>cDNA clones of human proteins involved in signal transduction sequenced by the Guthrie cDNA resource center (www.cdna.org).</title>
        <authorList>
            <person name="Kopatz S.A."/>
            <person name="Aronstam R.S."/>
            <person name="Sharma S.V."/>
        </authorList>
    </citation>
    <scope>NUCLEOTIDE SEQUENCE [LARGE SCALE MRNA] (ISOFORM 1)</scope>
    <source>
        <tissue>Brain</tissue>
    </source>
</reference>
<reference key="7">
    <citation type="journal article" date="2004" name="Nat. Genet.">
        <title>Complete sequencing and characterization of 21,243 full-length human cDNAs.</title>
        <authorList>
            <person name="Ota T."/>
            <person name="Suzuki Y."/>
            <person name="Nishikawa T."/>
            <person name="Otsuki T."/>
            <person name="Sugiyama T."/>
            <person name="Irie R."/>
            <person name="Wakamatsu A."/>
            <person name="Hayashi K."/>
            <person name="Sato H."/>
            <person name="Nagai K."/>
            <person name="Kimura K."/>
            <person name="Makita H."/>
            <person name="Sekine M."/>
            <person name="Obayashi M."/>
            <person name="Nishi T."/>
            <person name="Shibahara T."/>
            <person name="Tanaka T."/>
            <person name="Ishii S."/>
            <person name="Yamamoto J."/>
            <person name="Saito K."/>
            <person name="Kawai Y."/>
            <person name="Isono Y."/>
            <person name="Nakamura Y."/>
            <person name="Nagahari K."/>
            <person name="Murakami K."/>
            <person name="Yasuda T."/>
            <person name="Iwayanagi T."/>
            <person name="Wagatsuma M."/>
            <person name="Shiratori A."/>
            <person name="Sudo H."/>
            <person name="Hosoiri T."/>
            <person name="Kaku Y."/>
            <person name="Kodaira H."/>
            <person name="Kondo H."/>
            <person name="Sugawara M."/>
            <person name="Takahashi M."/>
            <person name="Kanda K."/>
            <person name="Yokoi T."/>
            <person name="Furuya T."/>
            <person name="Kikkawa E."/>
            <person name="Omura Y."/>
            <person name="Abe K."/>
            <person name="Kamihara K."/>
            <person name="Katsuta N."/>
            <person name="Sato K."/>
            <person name="Tanikawa M."/>
            <person name="Yamazaki M."/>
            <person name="Ninomiya K."/>
            <person name="Ishibashi T."/>
            <person name="Yamashita H."/>
            <person name="Murakawa K."/>
            <person name="Fujimori K."/>
            <person name="Tanai H."/>
            <person name="Kimata M."/>
            <person name="Watanabe M."/>
            <person name="Hiraoka S."/>
            <person name="Chiba Y."/>
            <person name="Ishida S."/>
            <person name="Ono Y."/>
            <person name="Takiguchi S."/>
            <person name="Watanabe S."/>
            <person name="Yosida M."/>
            <person name="Hotuta T."/>
            <person name="Kusano J."/>
            <person name="Kanehori K."/>
            <person name="Takahashi-Fujii A."/>
            <person name="Hara H."/>
            <person name="Tanase T.-O."/>
            <person name="Nomura Y."/>
            <person name="Togiya S."/>
            <person name="Komai F."/>
            <person name="Hara R."/>
            <person name="Takeuchi K."/>
            <person name="Arita M."/>
            <person name="Imose N."/>
            <person name="Musashino K."/>
            <person name="Yuuki H."/>
            <person name="Oshima A."/>
            <person name="Sasaki N."/>
            <person name="Aotsuka S."/>
            <person name="Yoshikawa Y."/>
            <person name="Matsunawa H."/>
            <person name="Ichihara T."/>
            <person name="Shiohata N."/>
            <person name="Sano S."/>
            <person name="Moriya S."/>
            <person name="Momiyama H."/>
            <person name="Satoh N."/>
            <person name="Takami S."/>
            <person name="Terashima Y."/>
            <person name="Suzuki O."/>
            <person name="Nakagawa S."/>
            <person name="Senoh A."/>
            <person name="Mizoguchi H."/>
            <person name="Goto Y."/>
            <person name="Shimizu F."/>
            <person name="Wakebe H."/>
            <person name="Hishigaki H."/>
            <person name="Watanabe T."/>
            <person name="Sugiyama A."/>
            <person name="Takemoto M."/>
            <person name="Kawakami B."/>
            <person name="Yamazaki M."/>
            <person name="Watanabe K."/>
            <person name="Kumagai A."/>
            <person name="Itakura S."/>
            <person name="Fukuzumi Y."/>
            <person name="Fujimori Y."/>
            <person name="Komiyama M."/>
            <person name="Tashiro H."/>
            <person name="Tanigami A."/>
            <person name="Fujiwara T."/>
            <person name="Ono T."/>
            <person name="Yamada K."/>
            <person name="Fujii Y."/>
            <person name="Ozaki K."/>
            <person name="Hirao M."/>
            <person name="Ohmori Y."/>
            <person name="Kawabata A."/>
            <person name="Hikiji T."/>
            <person name="Kobatake N."/>
            <person name="Inagaki H."/>
            <person name="Ikema Y."/>
            <person name="Okamoto S."/>
            <person name="Okitani R."/>
            <person name="Kawakami T."/>
            <person name="Noguchi S."/>
            <person name="Itoh T."/>
            <person name="Shigeta K."/>
            <person name="Senba T."/>
            <person name="Matsumura K."/>
            <person name="Nakajima Y."/>
            <person name="Mizuno T."/>
            <person name="Morinaga M."/>
            <person name="Sasaki M."/>
            <person name="Togashi T."/>
            <person name="Oyama M."/>
            <person name="Hata H."/>
            <person name="Watanabe M."/>
            <person name="Komatsu T."/>
            <person name="Mizushima-Sugano J."/>
            <person name="Satoh T."/>
            <person name="Shirai Y."/>
            <person name="Takahashi Y."/>
            <person name="Nakagawa K."/>
            <person name="Okumura K."/>
            <person name="Nagase T."/>
            <person name="Nomura N."/>
            <person name="Kikuchi H."/>
            <person name="Masuho Y."/>
            <person name="Yamashita R."/>
            <person name="Nakai K."/>
            <person name="Yada T."/>
            <person name="Nakamura Y."/>
            <person name="Ohara O."/>
            <person name="Isogai T."/>
            <person name="Sugano S."/>
        </authorList>
    </citation>
    <scope>NUCLEOTIDE SEQUENCE [LARGE SCALE MRNA] (ISOFORM 1)</scope>
    <source>
        <tissue>Brain</tissue>
    </source>
</reference>
<reference key="8">
    <citation type="journal article" date="2005" name="Nature">
        <title>Generation and annotation of the DNA sequences of human chromosomes 2 and 4.</title>
        <authorList>
            <person name="Hillier L.W."/>
            <person name="Graves T.A."/>
            <person name="Fulton R.S."/>
            <person name="Fulton L.A."/>
            <person name="Pepin K.H."/>
            <person name="Minx P."/>
            <person name="Wagner-McPherson C."/>
            <person name="Layman D."/>
            <person name="Wylie K."/>
            <person name="Sekhon M."/>
            <person name="Becker M.C."/>
            <person name="Fewell G.A."/>
            <person name="Delehaunty K.D."/>
            <person name="Miner T.L."/>
            <person name="Nash W.E."/>
            <person name="Kremitzki C."/>
            <person name="Oddy L."/>
            <person name="Du H."/>
            <person name="Sun H."/>
            <person name="Bradshaw-Cordum H."/>
            <person name="Ali J."/>
            <person name="Carter J."/>
            <person name="Cordes M."/>
            <person name="Harris A."/>
            <person name="Isak A."/>
            <person name="van Brunt A."/>
            <person name="Nguyen C."/>
            <person name="Du F."/>
            <person name="Courtney L."/>
            <person name="Kalicki J."/>
            <person name="Ozersky P."/>
            <person name="Abbott S."/>
            <person name="Armstrong J."/>
            <person name="Belter E.A."/>
            <person name="Caruso L."/>
            <person name="Cedroni M."/>
            <person name="Cotton M."/>
            <person name="Davidson T."/>
            <person name="Desai A."/>
            <person name="Elliott G."/>
            <person name="Erb T."/>
            <person name="Fronick C."/>
            <person name="Gaige T."/>
            <person name="Haakenson W."/>
            <person name="Haglund K."/>
            <person name="Holmes A."/>
            <person name="Harkins R."/>
            <person name="Kim K."/>
            <person name="Kruchowski S.S."/>
            <person name="Strong C.M."/>
            <person name="Grewal N."/>
            <person name="Goyea E."/>
            <person name="Hou S."/>
            <person name="Levy A."/>
            <person name="Martinka S."/>
            <person name="Mead K."/>
            <person name="McLellan M.D."/>
            <person name="Meyer R."/>
            <person name="Randall-Maher J."/>
            <person name="Tomlinson C."/>
            <person name="Dauphin-Kohlberg S."/>
            <person name="Kozlowicz-Reilly A."/>
            <person name="Shah N."/>
            <person name="Swearengen-Shahid S."/>
            <person name="Snider J."/>
            <person name="Strong J.T."/>
            <person name="Thompson J."/>
            <person name="Yoakum M."/>
            <person name="Leonard S."/>
            <person name="Pearman C."/>
            <person name="Trani L."/>
            <person name="Radionenko M."/>
            <person name="Waligorski J.E."/>
            <person name="Wang C."/>
            <person name="Rock S.M."/>
            <person name="Tin-Wollam A.-M."/>
            <person name="Maupin R."/>
            <person name="Latreille P."/>
            <person name="Wendl M.C."/>
            <person name="Yang S.-P."/>
            <person name="Pohl C."/>
            <person name="Wallis J.W."/>
            <person name="Spieth J."/>
            <person name="Bieri T.A."/>
            <person name="Berkowicz N."/>
            <person name="Nelson J.O."/>
            <person name="Osborne J."/>
            <person name="Ding L."/>
            <person name="Meyer R."/>
            <person name="Sabo A."/>
            <person name="Shotland Y."/>
            <person name="Sinha P."/>
            <person name="Wohldmann P.E."/>
            <person name="Cook L.L."/>
            <person name="Hickenbotham M.T."/>
            <person name="Eldred J."/>
            <person name="Williams D."/>
            <person name="Jones T.A."/>
            <person name="She X."/>
            <person name="Ciccarelli F.D."/>
            <person name="Izaurralde E."/>
            <person name="Taylor J."/>
            <person name="Schmutz J."/>
            <person name="Myers R.M."/>
            <person name="Cox D.R."/>
            <person name="Huang X."/>
            <person name="McPherson J.D."/>
            <person name="Mardis E.R."/>
            <person name="Clifton S.W."/>
            <person name="Warren W.C."/>
            <person name="Chinwalla A.T."/>
            <person name="Eddy S.R."/>
            <person name="Marra M.A."/>
            <person name="Ovcharenko I."/>
            <person name="Furey T.S."/>
            <person name="Miller W."/>
            <person name="Eichler E.E."/>
            <person name="Bork P."/>
            <person name="Suyama M."/>
            <person name="Torrents D."/>
            <person name="Waterston R.H."/>
            <person name="Wilson R.K."/>
        </authorList>
    </citation>
    <scope>NUCLEOTIDE SEQUENCE [LARGE SCALE GENOMIC DNA]</scope>
</reference>
<reference key="9">
    <citation type="submission" date="2005-09" db="EMBL/GenBank/DDBJ databases">
        <authorList>
            <person name="Mural R.J."/>
            <person name="Istrail S."/>
            <person name="Sutton G.G."/>
            <person name="Florea L."/>
            <person name="Halpern A.L."/>
            <person name="Mobarry C.M."/>
            <person name="Lippert R."/>
            <person name="Walenz B."/>
            <person name="Shatkay H."/>
            <person name="Dew I."/>
            <person name="Miller J.R."/>
            <person name="Flanigan M.J."/>
            <person name="Edwards N.J."/>
            <person name="Bolanos R."/>
            <person name="Fasulo D."/>
            <person name="Halldorsson B.V."/>
            <person name="Hannenhalli S."/>
            <person name="Turner R."/>
            <person name="Yooseph S."/>
            <person name="Lu F."/>
            <person name="Nusskern D.R."/>
            <person name="Shue B.C."/>
            <person name="Zheng X.H."/>
            <person name="Zhong F."/>
            <person name="Delcher A.L."/>
            <person name="Huson D.H."/>
            <person name="Kravitz S.A."/>
            <person name="Mouchard L."/>
            <person name="Reinert K."/>
            <person name="Remington K.A."/>
            <person name="Clark A.G."/>
            <person name="Waterman M.S."/>
            <person name="Eichler E.E."/>
            <person name="Adams M.D."/>
            <person name="Hunkapiller M.W."/>
            <person name="Myers E.W."/>
            <person name="Venter J.C."/>
        </authorList>
    </citation>
    <scope>NUCLEOTIDE SEQUENCE [LARGE SCALE GENOMIC DNA]</scope>
</reference>
<reference key="10">
    <citation type="journal article" date="2004" name="Genome Res.">
        <title>The status, quality, and expansion of the NIH full-length cDNA project: the Mammalian Gene Collection (MGC).</title>
        <authorList>
            <consortium name="The MGC Project Team"/>
        </authorList>
    </citation>
    <scope>NUCLEOTIDE SEQUENCE [LARGE SCALE MRNA] (ISOFORM 1)</scope>
</reference>
<reference key="11">
    <citation type="journal article" date="2002" name="Eur. J. Pharmacol.">
        <title>The human tachykinin NK1 (short form) and tachykinin NK4 receptor: a reappraisal.</title>
        <authorList>
            <person name="Page N.M."/>
            <person name="Bell N.J."/>
        </authorList>
    </citation>
    <scope>LACK OF DETECTION OF ISOFORM 2</scope>
</reference>
<reference key="12">
    <citation type="journal article" date="1993" name="Nature">
        <title>Amino-aromatic interaction between histidine 197 of the neurokinin-1 receptor and CP 96345.</title>
        <authorList>
            <person name="Fong T.M."/>
            <person name="Cascieri M.A."/>
            <person name="Yu H."/>
            <person name="Bansai A."/>
            <person name="Swain C."/>
            <person name="Strader C.D."/>
        </authorList>
    </citation>
    <scope>BINDING TO ANTAGONIST CP-96345</scope>
</reference>
<reference key="13">
    <citation type="journal article" date="2011" name="Biochim. Biophys. Acta">
        <title>NMR evidence of GM1-induced conformational change of Substance P using isotropic bicelles.</title>
        <authorList>
            <person name="Gayen A."/>
            <person name="Goswami S.K."/>
            <person name="Mukhopadhyay C."/>
        </authorList>
    </citation>
    <scope>STRUCTURE BY NMR OF 1-364</scope>
    <scope>DISULFIDE BOND</scope>
</reference>
<reference key="14">
    <citation type="journal article" date="2004" name="Pharmacogenomics J.">
        <title>Identification of single-nucleotide polymorphisms of the human neurokinin 1 receptor gene and pharmacological characterization of a Y192H variant.</title>
        <authorList>
            <person name="Randolph G.P."/>
            <person name="Simon J.S."/>
            <person name="Arreaza M.G."/>
            <person name="Qiu P."/>
            <person name="Lachowicz J.E."/>
            <person name="Duffy R.A."/>
        </authorList>
    </citation>
    <scope>VARIANT HIS-192</scope>
    <scope>CHARACTERIZATION OF VARIANT HIS-192</scope>
</reference>
<name>NK1R_HUMAN</name>
<sequence length="407" mass="46251">MDNVLPVDSDLSPNISTNTSEPNQFVQPAWQIVLWAAAYTVIVVTSVVGNVVVMWIILAHKRMRTVTNYFLVNLAFAEASMAAFNTVVNFTYAVHNEWYYGLFYCKFHNFFPIAAVFASIYSMTAVAFDRYMAIIHPLQPRLSATATKVVICVIWVLALLLAFPQGYYSTTETMPSRVVCMIEWPEHPNKIYEKVYHICVTVLIYFLPLLVIGYAYTVVGITLWASEIPGDSSDRYHEQVSAKRKVVKMMIVVVCTFAICWLPFHIFFLLPYINPDLYLKKFIQQVYLAIMWLAMSSTMYNPIIYCCLNDRFRLGFKHAFRCCPFISAGDYEGLEMKSTRYLQTQGSVYKVSRLETTISTVVGAHEEEPEDGPKATPSSLDLTSNCSSRSDSKTMTESFSFSSNVLS</sequence>
<feature type="chain" id="PRO_0000069885" description="Substance-P receptor">
    <location>
        <begin position="1"/>
        <end position="407"/>
    </location>
</feature>
<feature type="topological domain" description="Extracellular" evidence="2">
    <location>
        <begin position="1"/>
        <end position="31"/>
    </location>
</feature>
<feature type="transmembrane region" description="Helical; Name=1" evidence="2">
    <location>
        <begin position="32"/>
        <end position="54"/>
    </location>
</feature>
<feature type="topological domain" description="Cytoplasmic" evidence="2">
    <location>
        <begin position="55"/>
        <end position="64"/>
    </location>
</feature>
<feature type="transmembrane region" description="Helical; Name=2" evidence="2">
    <location>
        <begin position="65"/>
        <end position="86"/>
    </location>
</feature>
<feature type="topological domain" description="Extracellular" evidence="2">
    <location>
        <begin position="87"/>
        <end position="106"/>
    </location>
</feature>
<feature type="transmembrane region" description="Helical; Name=3" evidence="2">
    <location>
        <begin position="107"/>
        <end position="128"/>
    </location>
</feature>
<feature type="topological domain" description="Cytoplasmic" evidence="2">
    <location>
        <begin position="129"/>
        <end position="148"/>
    </location>
</feature>
<feature type="transmembrane region" description="Helical; Name=4" evidence="2">
    <location>
        <begin position="149"/>
        <end position="169"/>
    </location>
</feature>
<feature type="topological domain" description="Extracellular" evidence="2">
    <location>
        <begin position="170"/>
        <end position="194"/>
    </location>
</feature>
<feature type="transmembrane region" description="Helical; Name=5" evidence="2">
    <location>
        <begin position="195"/>
        <end position="219"/>
    </location>
</feature>
<feature type="topological domain" description="Cytoplasmic" evidence="2">
    <location>
        <begin position="220"/>
        <end position="248"/>
    </location>
</feature>
<feature type="transmembrane region" description="Helical; Name=6" evidence="2">
    <location>
        <begin position="249"/>
        <end position="270"/>
    </location>
</feature>
<feature type="topological domain" description="Extracellular" evidence="2">
    <location>
        <begin position="271"/>
        <end position="283"/>
    </location>
</feature>
<feature type="transmembrane region" description="Helical; Name=7" evidence="2">
    <location>
        <begin position="284"/>
        <end position="308"/>
    </location>
</feature>
<feature type="topological domain" description="Cytoplasmic" evidence="2">
    <location>
        <begin position="309"/>
        <end position="407"/>
    </location>
</feature>
<feature type="region of interest" description="Disordered" evidence="4">
    <location>
        <begin position="364"/>
        <end position="407"/>
    </location>
</feature>
<feature type="compositionally biased region" description="Polar residues" evidence="4">
    <location>
        <begin position="376"/>
        <end position="407"/>
    </location>
</feature>
<feature type="binding site" evidence="7">
    <location>
        <position position="197"/>
    </location>
    <ligand>
        <name>CP-96345</name>
        <dbReference type="ChEBI" id="CHEBI:187905"/>
        <note>antagonist</note>
    </ligand>
</feature>
<feature type="lipid moiety-binding region" description="S-palmitoyl cysteine" evidence="2">
    <location>
        <position position="322"/>
    </location>
</feature>
<feature type="glycosylation site" description="N-linked (GlcNAc...) asparagine" evidence="2">
    <location>
        <position position="14"/>
    </location>
</feature>
<feature type="glycosylation site" description="N-linked (GlcNAc...) asparagine" evidence="2">
    <location>
        <position position="18"/>
    </location>
</feature>
<feature type="disulfide bond" evidence="3 6">
    <location>
        <begin position="105"/>
        <end position="180"/>
    </location>
</feature>
<feature type="splice variant" id="VSP_053824" description="In isoform 2." evidence="8">
    <location>
        <begin position="312"/>
        <end position="407"/>
    </location>
</feature>
<feature type="sequence variant" id="VAR_026826" description="Display properties similar to those of the wild-type receptor; dbSNP:rs200685841." evidence="5">
    <original>Y</original>
    <variation>H</variation>
    <location>
        <position position="192"/>
    </location>
</feature>
<feature type="sequence conflict" description="In Ref. 3; AAA59936." evidence="9" ref="3">
    <original>V</original>
    <variation>C</variation>
    <location>
        <position position="116"/>
    </location>
</feature>
<feature type="sequence conflict" description="In Ref. 3; AAA59936." evidence="9" ref="3">
    <original>V</original>
    <variation>I</variation>
    <location>
        <position position="218"/>
    </location>
</feature>
<feature type="strand" evidence="12">
    <location>
        <begin position="4"/>
        <end position="8"/>
    </location>
</feature>
<feature type="turn" evidence="12">
    <location>
        <begin position="18"/>
        <end position="20"/>
    </location>
</feature>
<feature type="turn" evidence="12">
    <location>
        <begin position="24"/>
        <end position="26"/>
    </location>
</feature>
<feature type="helix" evidence="13">
    <location>
        <begin position="29"/>
        <end position="58"/>
    </location>
</feature>
<feature type="helix" evidence="13">
    <location>
        <begin position="61"/>
        <end position="63"/>
    </location>
</feature>
<feature type="helix" evidence="13">
    <location>
        <begin position="66"/>
        <end position="94"/>
    </location>
</feature>
<feature type="helix" evidence="13">
    <location>
        <begin position="102"/>
        <end position="135"/>
    </location>
</feature>
<feature type="strand" evidence="14">
    <location>
        <begin position="136"/>
        <end position="139"/>
    </location>
</feature>
<feature type="helix" evidence="13">
    <location>
        <begin position="144"/>
        <end position="168"/>
    </location>
</feature>
<feature type="strand" evidence="13">
    <location>
        <begin position="169"/>
        <end position="182"/>
    </location>
</feature>
<feature type="helix" evidence="13">
    <location>
        <begin position="191"/>
        <end position="204"/>
    </location>
</feature>
<feature type="helix" evidence="13">
    <location>
        <begin position="206"/>
        <end position="225"/>
    </location>
</feature>
<feature type="strand" evidence="12">
    <location>
        <begin position="229"/>
        <end position="234"/>
    </location>
</feature>
<feature type="helix" evidence="13">
    <location>
        <begin position="238"/>
        <end position="273"/>
    </location>
</feature>
<feature type="helix" evidence="15">
    <location>
        <begin position="275"/>
        <end position="279"/>
    </location>
</feature>
<feature type="helix" evidence="13">
    <location>
        <begin position="283"/>
        <end position="308"/>
    </location>
</feature>
<feature type="helix" evidence="13">
    <location>
        <begin position="310"/>
        <end position="319"/>
    </location>
</feature>
<feature type="turn" evidence="13">
    <location>
        <begin position="320"/>
        <end position="322"/>
    </location>
</feature>
<feature type="strand" evidence="13">
    <location>
        <begin position="323"/>
        <end position="325"/>
    </location>
</feature>
<feature type="strand" evidence="12">
    <location>
        <begin position="335"/>
        <end position="340"/>
    </location>
</feature>
<feature type="strand" evidence="12">
    <location>
        <begin position="342"/>
        <end position="344"/>
    </location>
</feature>
<feature type="turn" evidence="12">
    <location>
        <begin position="355"/>
        <end position="358"/>
    </location>
</feature>
<feature type="strand" evidence="12">
    <location>
        <begin position="359"/>
        <end position="361"/>
    </location>
</feature>
<keyword id="KW-0002">3D-structure</keyword>
<keyword id="KW-0025">Alternative splicing</keyword>
<keyword id="KW-1003">Cell membrane</keyword>
<keyword id="KW-1015">Disulfide bond</keyword>
<keyword id="KW-0297">G-protein coupled receptor</keyword>
<keyword id="KW-0325">Glycoprotein</keyword>
<keyword id="KW-0449">Lipoprotein</keyword>
<keyword id="KW-0472">Membrane</keyword>
<keyword id="KW-0564">Palmitate</keyword>
<keyword id="KW-1267">Proteomics identification</keyword>
<keyword id="KW-0675">Receptor</keyword>
<keyword id="KW-1185">Reference proteome</keyword>
<keyword id="KW-0807">Transducer</keyword>
<keyword id="KW-0812">Transmembrane</keyword>
<keyword id="KW-1133">Transmembrane helix</keyword>
<protein>
    <recommendedName>
        <fullName>Substance-P receptor</fullName>
        <shortName>SPR</shortName>
    </recommendedName>
    <alternativeName>
        <fullName>NK-1 receptor</fullName>
        <shortName>NK-1R</shortName>
    </alternativeName>
    <alternativeName>
        <fullName>Tachykinin receptor 1</fullName>
    </alternativeName>
</protein>
<evidence type="ECO:0000250" key="1"/>
<evidence type="ECO:0000255" key="2"/>
<evidence type="ECO:0000255" key="3">
    <source>
        <dbReference type="PROSITE-ProRule" id="PRU00521"/>
    </source>
</evidence>
<evidence type="ECO:0000256" key="4">
    <source>
        <dbReference type="SAM" id="MobiDB-lite"/>
    </source>
</evidence>
<evidence type="ECO:0000269" key="5">
    <source>
    </source>
</evidence>
<evidence type="ECO:0000269" key="6">
    <source>
    </source>
</evidence>
<evidence type="ECO:0000269" key="7">
    <source>
    </source>
</evidence>
<evidence type="ECO:0000303" key="8">
    <source>
    </source>
</evidence>
<evidence type="ECO:0000305" key="9"/>
<evidence type="ECO:0000305" key="10">
    <source>
    </source>
</evidence>
<evidence type="ECO:0000305" key="11">
    <source>
    </source>
</evidence>
<evidence type="ECO:0007829" key="12">
    <source>
        <dbReference type="PDB" id="2KS9"/>
    </source>
</evidence>
<evidence type="ECO:0007829" key="13">
    <source>
        <dbReference type="PDB" id="6HLP"/>
    </source>
</evidence>
<evidence type="ECO:0007829" key="14">
    <source>
        <dbReference type="PDB" id="7P02"/>
    </source>
</evidence>
<evidence type="ECO:0007829" key="15">
    <source>
        <dbReference type="PDB" id="8U26"/>
    </source>
</evidence>
<proteinExistence type="evidence at protein level"/>
<dbReference type="EMBL" id="S62045">
    <property type="protein sequence ID" value="AAB20168.2"/>
    <property type="molecule type" value="mRNA"/>
</dbReference>
<dbReference type="EMBL" id="M74290">
    <property type="protein sequence ID" value="AAA60601.1"/>
    <property type="molecule type" value="mRNA"/>
</dbReference>
<dbReference type="EMBL" id="M81797">
    <property type="protein sequence ID" value="AAA59933.1"/>
    <property type="molecule type" value="mRNA"/>
</dbReference>
<dbReference type="EMBL" id="M76675">
    <property type="protein sequence ID" value="AAA59936.1"/>
    <property type="molecule type" value="mRNA"/>
</dbReference>
<dbReference type="EMBL" id="X65177">
    <property type="protein sequence ID" value="CAA46292.1"/>
    <property type="molecule type" value="Genomic_DNA"/>
</dbReference>
<dbReference type="EMBL" id="X65178">
    <property type="protein sequence ID" value="CAA46292.1"/>
    <property type="status" value="JOINED"/>
    <property type="molecule type" value="Genomic_DNA"/>
</dbReference>
<dbReference type="EMBL" id="X65179">
    <property type="protein sequence ID" value="CAA46292.1"/>
    <property type="status" value="JOINED"/>
    <property type="molecule type" value="Genomic_DNA"/>
</dbReference>
<dbReference type="EMBL" id="X65180">
    <property type="protein sequence ID" value="CAA46292.1"/>
    <property type="status" value="JOINED"/>
    <property type="molecule type" value="Genomic_DNA"/>
</dbReference>
<dbReference type="EMBL" id="X65181">
    <property type="protein sequence ID" value="CAA46292.1"/>
    <property type="status" value="JOINED"/>
    <property type="molecule type" value="Genomic_DNA"/>
</dbReference>
<dbReference type="EMBL" id="M84425">
    <property type="protein sequence ID" value="AAA36641.1"/>
    <property type="molecule type" value="mRNA"/>
</dbReference>
<dbReference type="EMBL" id="M84426">
    <property type="protein sequence ID" value="AAA36644.1"/>
    <property type="molecule type" value="mRNA"/>
</dbReference>
<dbReference type="EMBL" id="AY462098">
    <property type="protein sequence ID" value="AAR23925.1"/>
    <property type="molecule type" value="mRNA"/>
</dbReference>
<dbReference type="EMBL" id="AK289765">
    <property type="protein sequence ID" value="BAF82454.1"/>
    <property type="molecule type" value="mRNA"/>
</dbReference>
<dbReference type="EMBL" id="CH471053">
    <property type="protein sequence ID" value="EAW99596.1"/>
    <property type="molecule type" value="Genomic_DNA"/>
</dbReference>
<dbReference type="EMBL" id="BC074911">
    <property type="protein sequence ID" value="AAH74911.1"/>
    <property type="molecule type" value="mRNA"/>
</dbReference>
<dbReference type="EMBL" id="BC074912">
    <property type="protein sequence ID" value="AAH74912.1"/>
    <property type="molecule type" value="mRNA"/>
</dbReference>
<dbReference type="EMBL" id="AC007400">
    <property type="status" value="NOT_ANNOTATED_CDS"/>
    <property type="molecule type" value="Genomic_DNA"/>
</dbReference>
<dbReference type="CCDS" id="CCDS1958.1">
    <molecule id="P25103-1"/>
</dbReference>
<dbReference type="CCDS" id="CCDS46345.1">
    <molecule id="P25103-3"/>
</dbReference>
<dbReference type="PIR" id="A41134">
    <property type="entry name" value="JQ1274"/>
</dbReference>
<dbReference type="RefSeq" id="NP_001049.1">
    <molecule id="P25103-1"/>
    <property type="nucleotide sequence ID" value="NM_001058.4"/>
</dbReference>
<dbReference type="RefSeq" id="NP_056542.1">
    <molecule id="P25103-3"/>
    <property type="nucleotide sequence ID" value="NM_015727.3"/>
</dbReference>
<dbReference type="PDB" id="2KS9">
    <property type="method" value="NMR"/>
    <property type="chains" value="A=1-364"/>
</dbReference>
<dbReference type="PDB" id="2KSA">
    <property type="method" value="NMR"/>
    <property type="chains" value="A=1-364"/>
</dbReference>
<dbReference type="PDB" id="2KSB">
    <property type="method" value="NMR"/>
    <property type="chains" value="A=1-364"/>
</dbReference>
<dbReference type="PDB" id="6E59">
    <property type="method" value="X-ray"/>
    <property type="resolution" value="3.40 A"/>
    <property type="chains" value="A=1-227, A=238-346"/>
</dbReference>
<dbReference type="PDB" id="6HLL">
    <property type="method" value="X-ray"/>
    <property type="resolution" value="3.27 A"/>
    <property type="chains" value="A=1-226, A=238-335"/>
</dbReference>
<dbReference type="PDB" id="6HLO">
    <property type="method" value="X-ray"/>
    <property type="resolution" value="2.40 A"/>
    <property type="chains" value="A=1-226, A=238-335"/>
</dbReference>
<dbReference type="PDB" id="6HLP">
    <property type="method" value="X-ray"/>
    <property type="resolution" value="2.20 A"/>
    <property type="chains" value="A=1-226, A=238-335"/>
</dbReference>
<dbReference type="PDB" id="7P00">
    <property type="method" value="EM"/>
    <property type="resolution" value="2.71 A"/>
    <property type="chains" value="R=1-335"/>
</dbReference>
<dbReference type="PDB" id="7P02">
    <property type="method" value="EM"/>
    <property type="resolution" value="2.87 A"/>
    <property type="chains" value="R=1-335"/>
</dbReference>
<dbReference type="PDB" id="7RMG">
    <property type="method" value="EM"/>
    <property type="resolution" value="3.00 A"/>
    <property type="chains" value="R=1-407"/>
</dbReference>
<dbReference type="PDB" id="7RMH">
    <property type="method" value="EM"/>
    <property type="resolution" value="3.10 A"/>
    <property type="chains" value="R=1-407"/>
</dbReference>
<dbReference type="PDB" id="7RMI">
    <property type="method" value="EM"/>
    <property type="resolution" value="3.20 A"/>
    <property type="chains" value="R=1-407"/>
</dbReference>
<dbReference type="PDB" id="8U26">
    <property type="method" value="EM"/>
    <property type="resolution" value="2.50 A"/>
    <property type="chains" value="R=1-407"/>
</dbReference>
<dbReference type="PDBsum" id="2KS9"/>
<dbReference type="PDBsum" id="2KSA"/>
<dbReference type="PDBsum" id="2KSB"/>
<dbReference type="PDBsum" id="6E59"/>
<dbReference type="PDBsum" id="6HLL"/>
<dbReference type="PDBsum" id="6HLO"/>
<dbReference type="PDBsum" id="6HLP"/>
<dbReference type="PDBsum" id="7P00"/>
<dbReference type="PDBsum" id="7P02"/>
<dbReference type="PDBsum" id="7RMG"/>
<dbReference type="PDBsum" id="7RMH"/>
<dbReference type="PDBsum" id="7RMI"/>
<dbReference type="PDBsum" id="8U26"/>
<dbReference type="BMRB" id="P25103"/>
<dbReference type="EMDB" id="EMD-13140"/>
<dbReference type="EMDB" id="EMD-13141"/>
<dbReference type="EMDB" id="EMD-24569"/>
<dbReference type="EMDB" id="EMD-24570"/>
<dbReference type="EMDB" id="EMD-24572"/>
<dbReference type="EMDB" id="EMD-41840"/>
<dbReference type="SMR" id="P25103"/>
<dbReference type="BioGRID" id="112732">
    <property type="interactions" value="72"/>
</dbReference>
<dbReference type="CORUM" id="P25103"/>
<dbReference type="FunCoup" id="P25103">
    <property type="interactions" value="720"/>
</dbReference>
<dbReference type="IntAct" id="P25103">
    <property type="interactions" value="64"/>
</dbReference>
<dbReference type="STRING" id="9606.ENSP00000303522"/>
<dbReference type="BindingDB" id="P25103"/>
<dbReference type="ChEMBL" id="CHEMBL249"/>
<dbReference type="DrugBank" id="DB00673">
    <property type="generic name" value="Aprepitant"/>
</dbReference>
<dbReference type="DrugBank" id="DB05072">
    <property type="generic name" value="AV608"/>
</dbReference>
<dbReference type="DrugBank" id="DB06634">
    <property type="generic name" value="Casopitant"/>
</dbReference>
<dbReference type="DrugBank" id="DB05421">
    <property type="generic name" value="CP-122721"/>
</dbReference>
<dbReference type="DrugBank" id="DB16744">
    <property type="generic name" value="CP-96345"/>
</dbReference>
<dbReference type="DrugBank" id="DB18968">
    <property type="generic name" value="Elinzanetant"/>
</dbReference>
<dbReference type="DrugBank" id="DB12122">
    <property type="generic name" value="Figopitant"/>
</dbReference>
<dbReference type="DrugBank" id="DB06717">
    <property type="generic name" value="Fosaprepitant"/>
</dbReference>
<dbReference type="DrugBank" id="DB14019">
    <property type="generic name" value="Fosnetupitant"/>
</dbReference>
<dbReference type="DrugBank" id="DB05418">
    <property type="generic name" value="GW 597599"/>
</dbReference>
<dbReference type="DrugBank" id="DB01221">
    <property type="generic name" value="Ketamine"/>
</dbReference>
<dbReference type="DrugBank" id="DB09048">
    <property type="generic name" value="Netupitant"/>
</dbReference>
<dbReference type="DrugBank" id="DB12427">
    <property type="generic name" value="Orvepitant"/>
</dbReference>
<dbReference type="DrugBank" id="DB04029">
    <property type="generic name" value="Phenylalanylamide"/>
</dbReference>
<dbReference type="DrugBank" id="DB05466">
    <property type="generic name" value="R673"/>
</dbReference>
<dbReference type="DrugBank" id="DB09291">
    <property type="generic name" value="Rolapitant"/>
</dbReference>
<dbReference type="DrugBank" id="DB16742">
    <property type="generic name" value="RP-67580"/>
</dbReference>
<dbReference type="DrugBank" id="DB01037">
    <property type="generic name" value="Selegiline"/>
</dbReference>
<dbReference type="DrugBank" id="DB12973">
    <property type="generic name" value="Serlopitant"/>
</dbReference>
<dbReference type="DrugBank" id="DB05790">
    <property type="generic name" value="SR 140333"/>
</dbReference>
<dbReference type="DrugBank" id="DB19198">
    <property type="generic name" value="Substance P"/>
</dbReference>
<dbReference type="DrugBank" id="DB12580">
    <property type="generic name" value="Tradipitant"/>
</dbReference>
<dbReference type="DrugBank" id="DB00193">
    <property type="generic name" value="Tramadol"/>
</dbReference>
<dbReference type="DrugBank" id="DB04894">
    <property type="generic name" value="Vapreotide"/>
</dbReference>
<dbReference type="DrugBank" id="DB11949">
    <property type="generic name" value="Vestipitant"/>
</dbReference>
<dbReference type="DrugBank" id="DB12436">
    <property type="generic name" value="Vofopitant"/>
</dbReference>
<dbReference type="DrugCentral" id="P25103"/>
<dbReference type="GuidetoPHARMACOLOGY" id="360"/>
<dbReference type="GlyCosmos" id="P25103">
    <property type="glycosylation" value="2 sites, No reported glycans"/>
</dbReference>
<dbReference type="GlyGen" id="P25103">
    <property type="glycosylation" value="5 sites"/>
</dbReference>
<dbReference type="iPTMnet" id="P25103"/>
<dbReference type="PhosphoSitePlus" id="P25103"/>
<dbReference type="BioMuta" id="TACR1"/>
<dbReference type="DMDM" id="128359"/>
<dbReference type="MassIVE" id="P25103"/>
<dbReference type="PaxDb" id="9606-ENSP00000303522"/>
<dbReference type="PeptideAtlas" id="P25103"/>
<dbReference type="ProteomicsDB" id="54260">
    <molecule id="P25103-1"/>
</dbReference>
<dbReference type="ABCD" id="P25103">
    <property type="antibodies" value="1 sequenced antibody"/>
</dbReference>
<dbReference type="Antibodypedia" id="16803">
    <property type="antibodies" value="576 antibodies from 40 providers"/>
</dbReference>
<dbReference type="DNASU" id="6869"/>
<dbReference type="Ensembl" id="ENST00000305249.10">
    <molecule id="P25103-1"/>
    <property type="protein sequence ID" value="ENSP00000303522.4"/>
    <property type="gene ID" value="ENSG00000115353.11"/>
</dbReference>
<dbReference type="Ensembl" id="ENST00000409848.3">
    <molecule id="P25103-3"/>
    <property type="protein sequence ID" value="ENSP00000386448.3"/>
    <property type="gene ID" value="ENSG00000115353.11"/>
</dbReference>
<dbReference type="GeneID" id="6869"/>
<dbReference type="KEGG" id="hsa:6869"/>
<dbReference type="MANE-Select" id="ENST00000305249.10">
    <property type="protein sequence ID" value="ENSP00000303522.4"/>
    <property type="RefSeq nucleotide sequence ID" value="NM_001058.4"/>
    <property type="RefSeq protein sequence ID" value="NP_001049.1"/>
</dbReference>
<dbReference type="UCSC" id="uc002sng.3">
    <molecule id="P25103-1"/>
    <property type="organism name" value="human"/>
</dbReference>
<dbReference type="AGR" id="HGNC:11526"/>
<dbReference type="CTD" id="6869"/>
<dbReference type="DisGeNET" id="6869"/>
<dbReference type="GeneCards" id="TACR1"/>
<dbReference type="HGNC" id="HGNC:11526">
    <property type="gene designation" value="TACR1"/>
</dbReference>
<dbReference type="HPA" id="ENSG00000115353">
    <property type="expression patterns" value="Tissue enhanced (adipose)"/>
</dbReference>
<dbReference type="MIM" id="162323">
    <property type="type" value="gene"/>
</dbReference>
<dbReference type="neXtProt" id="NX_P25103"/>
<dbReference type="OpenTargets" id="ENSG00000115353"/>
<dbReference type="PharmGKB" id="PA36302"/>
<dbReference type="VEuPathDB" id="HostDB:ENSG00000115353"/>
<dbReference type="eggNOG" id="KOG4219">
    <property type="taxonomic scope" value="Eukaryota"/>
</dbReference>
<dbReference type="GeneTree" id="ENSGT00940000153745"/>
<dbReference type="HOGENOM" id="CLU_009579_6_1_1"/>
<dbReference type="InParanoid" id="P25103"/>
<dbReference type="OMA" id="CMIKWPE"/>
<dbReference type="OrthoDB" id="5981855at2759"/>
<dbReference type="PAN-GO" id="P25103">
    <property type="GO annotations" value="4 GO annotations based on evolutionary models"/>
</dbReference>
<dbReference type="PhylomeDB" id="P25103"/>
<dbReference type="TreeFam" id="TF315303"/>
<dbReference type="PathwayCommons" id="P25103"/>
<dbReference type="Reactome" id="R-HSA-380095">
    <property type="pathway name" value="Tachykinin receptors bind tachykinins"/>
</dbReference>
<dbReference type="Reactome" id="R-HSA-416476">
    <property type="pathway name" value="G alpha (q) signalling events"/>
</dbReference>
<dbReference type="Reactome" id="R-HSA-8856825">
    <property type="pathway name" value="Cargo recognition for clathrin-mediated endocytosis"/>
</dbReference>
<dbReference type="Reactome" id="R-HSA-8856828">
    <property type="pathway name" value="Clathrin-mediated endocytosis"/>
</dbReference>
<dbReference type="SignaLink" id="P25103"/>
<dbReference type="SIGNOR" id="P25103"/>
<dbReference type="BioGRID-ORCS" id="6869">
    <property type="hits" value="13 hits in 1156 CRISPR screens"/>
</dbReference>
<dbReference type="ChiTaRS" id="TACR1">
    <property type="organism name" value="human"/>
</dbReference>
<dbReference type="EvolutionaryTrace" id="P25103"/>
<dbReference type="GeneWiki" id="Tachykinin_receptor_1"/>
<dbReference type="GenomeRNAi" id="6869"/>
<dbReference type="Pharos" id="P25103">
    <property type="development level" value="Tclin"/>
</dbReference>
<dbReference type="PRO" id="PR:P25103"/>
<dbReference type="Proteomes" id="UP000005640">
    <property type="component" value="Chromosome 2"/>
</dbReference>
<dbReference type="RNAct" id="P25103">
    <property type="molecule type" value="protein"/>
</dbReference>
<dbReference type="Bgee" id="ENSG00000115353">
    <property type="expression patterns" value="Expressed in male germ line stem cell (sensu Vertebrata) in testis and 127 other cell types or tissues"/>
</dbReference>
<dbReference type="GO" id="GO:0044297">
    <property type="term" value="C:cell body"/>
    <property type="evidence" value="ECO:0007669"/>
    <property type="project" value="Ensembl"/>
</dbReference>
<dbReference type="GO" id="GO:0009986">
    <property type="term" value="C:cell surface"/>
    <property type="evidence" value="ECO:0007669"/>
    <property type="project" value="Ensembl"/>
</dbReference>
<dbReference type="GO" id="GO:0030425">
    <property type="term" value="C:dendrite"/>
    <property type="evidence" value="ECO:0007669"/>
    <property type="project" value="Ensembl"/>
</dbReference>
<dbReference type="GO" id="GO:0005886">
    <property type="term" value="C:plasma membrane"/>
    <property type="evidence" value="ECO:0000314"/>
    <property type="project" value="BHF-UCL"/>
</dbReference>
<dbReference type="GO" id="GO:0045211">
    <property type="term" value="C:postsynaptic membrane"/>
    <property type="evidence" value="ECO:0007669"/>
    <property type="project" value="Ensembl"/>
</dbReference>
<dbReference type="GO" id="GO:0036126">
    <property type="term" value="C:sperm flagellum"/>
    <property type="evidence" value="ECO:0000314"/>
    <property type="project" value="UniProtKB"/>
</dbReference>
<dbReference type="GO" id="GO:0061827">
    <property type="term" value="C:sperm head"/>
    <property type="evidence" value="ECO:0000314"/>
    <property type="project" value="UniProtKB"/>
</dbReference>
<dbReference type="GO" id="GO:0097225">
    <property type="term" value="C:sperm midpiece"/>
    <property type="evidence" value="ECO:0000314"/>
    <property type="project" value="UniProtKB"/>
</dbReference>
<dbReference type="GO" id="GO:0016496">
    <property type="term" value="F:substance P receptor activity"/>
    <property type="evidence" value="ECO:0000315"/>
    <property type="project" value="UniProtKB"/>
</dbReference>
<dbReference type="GO" id="GO:0004995">
    <property type="term" value="F:tachykinin receptor activity"/>
    <property type="evidence" value="ECO:0000304"/>
    <property type="project" value="ProtInc"/>
</dbReference>
<dbReference type="GO" id="GO:0002118">
    <property type="term" value="P:aggressive behavior"/>
    <property type="evidence" value="ECO:0007669"/>
    <property type="project" value="Ensembl"/>
</dbReference>
<dbReference type="GO" id="GO:0003051">
    <property type="term" value="P:angiotensin-mediated drinking behavior"/>
    <property type="evidence" value="ECO:0007669"/>
    <property type="project" value="Ensembl"/>
</dbReference>
<dbReference type="GO" id="GO:0008306">
    <property type="term" value="P:associative learning"/>
    <property type="evidence" value="ECO:0007669"/>
    <property type="project" value="Ensembl"/>
</dbReference>
<dbReference type="GO" id="GO:0048266">
    <property type="term" value="P:behavioral response to pain"/>
    <property type="evidence" value="ECO:0007669"/>
    <property type="project" value="Ensembl"/>
</dbReference>
<dbReference type="GO" id="GO:0009582">
    <property type="term" value="P:detection of abiotic stimulus"/>
    <property type="evidence" value="ECO:0000304"/>
    <property type="project" value="ProtInc"/>
</dbReference>
<dbReference type="GO" id="GO:0042755">
    <property type="term" value="P:eating behavior"/>
    <property type="evidence" value="ECO:0007669"/>
    <property type="project" value="Ensembl"/>
</dbReference>
<dbReference type="GO" id="GO:0006954">
    <property type="term" value="P:inflammatory response"/>
    <property type="evidence" value="ECO:0000304"/>
    <property type="project" value="ProtInc"/>
</dbReference>
<dbReference type="GO" id="GO:0007616">
    <property type="term" value="P:long-term memory"/>
    <property type="evidence" value="ECO:0007669"/>
    <property type="project" value="Ensembl"/>
</dbReference>
<dbReference type="GO" id="GO:0035106">
    <property type="term" value="P:operant conditioning"/>
    <property type="evidence" value="ECO:0007669"/>
    <property type="project" value="Ensembl"/>
</dbReference>
<dbReference type="GO" id="GO:0007200">
    <property type="term" value="P:phospholipase C-activating G protein-coupled receptor signaling pathway"/>
    <property type="evidence" value="ECO:0000304"/>
    <property type="project" value="ProtInc"/>
</dbReference>
<dbReference type="GO" id="GO:0045760">
    <property type="term" value="P:positive regulation of action potential"/>
    <property type="evidence" value="ECO:0007669"/>
    <property type="project" value="Ensembl"/>
</dbReference>
<dbReference type="GO" id="GO:0045777">
    <property type="term" value="P:positive regulation of blood pressure"/>
    <property type="evidence" value="ECO:0007669"/>
    <property type="project" value="Ensembl"/>
</dbReference>
<dbReference type="GO" id="GO:0007204">
    <property type="term" value="P:positive regulation of cytosolic calcium ion concentration"/>
    <property type="evidence" value="ECO:0000314"/>
    <property type="project" value="UniProtKB"/>
</dbReference>
<dbReference type="GO" id="GO:0010634">
    <property type="term" value="P:positive regulation of epithelial cell migration"/>
    <property type="evidence" value="ECO:0007669"/>
    <property type="project" value="Ensembl"/>
</dbReference>
<dbReference type="GO" id="GO:0050679">
    <property type="term" value="P:positive regulation of epithelial cell proliferation"/>
    <property type="evidence" value="ECO:0007669"/>
    <property type="project" value="Ensembl"/>
</dbReference>
<dbReference type="GO" id="GO:1902093">
    <property type="term" value="P:positive regulation of flagellated sperm motility"/>
    <property type="evidence" value="ECO:0000315"/>
    <property type="project" value="UniProtKB"/>
</dbReference>
<dbReference type="GO" id="GO:0046887">
    <property type="term" value="P:positive regulation of hormone secretion"/>
    <property type="evidence" value="ECO:0007669"/>
    <property type="project" value="Ensembl"/>
</dbReference>
<dbReference type="GO" id="GO:0002687">
    <property type="term" value="P:positive regulation of leukocyte migration"/>
    <property type="evidence" value="ECO:0007669"/>
    <property type="project" value="Ensembl"/>
</dbReference>
<dbReference type="GO" id="GO:0050671">
    <property type="term" value="P:positive regulation of lymphocyte proliferation"/>
    <property type="evidence" value="ECO:0007669"/>
    <property type="project" value="Ensembl"/>
</dbReference>
<dbReference type="GO" id="GO:0045778">
    <property type="term" value="P:positive regulation of ossification"/>
    <property type="evidence" value="ECO:0007669"/>
    <property type="project" value="Ensembl"/>
</dbReference>
<dbReference type="GO" id="GO:0051496">
    <property type="term" value="P:positive regulation of stress fiber assembly"/>
    <property type="evidence" value="ECO:0007669"/>
    <property type="project" value="Ensembl"/>
</dbReference>
<dbReference type="GO" id="GO:0032224">
    <property type="term" value="P:positive regulation of synaptic transmission, cholinergic"/>
    <property type="evidence" value="ECO:0007669"/>
    <property type="project" value="Ensembl"/>
</dbReference>
<dbReference type="GO" id="GO:0032230">
    <property type="term" value="P:positive regulation of synaptic transmission, GABAergic"/>
    <property type="evidence" value="ECO:0007669"/>
    <property type="project" value="Ensembl"/>
</dbReference>
<dbReference type="GO" id="GO:0070474">
    <property type="term" value="P:positive regulation of uterine smooth muscle contraction"/>
    <property type="evidence" value="ECO:0007669"/>
    <property type="project" value="Ensembl"/>
</dbReference>
<dbReference type="GO" id="GO:0043117">
    <property type="term" value="P:positive regulation of vascular permeability"/>
    <property type="evidence" value="ECO:0007669"/>
    <property type="project" value="Ensembl"/>
</dbReference>
<dbReference type="GO" id="GO:0045907">
    <property type="term" value="P:positive regulation of vasoconstriction"/>
    <property type="evidence" value="ECO:0007669"/>
    <property type="project" value="Ensembl"/>
</dbReference>
<dbReference type="GO" id="GO:0014910">
    <property type="term" value="P:regulation of smooth muscle cell migration"/>
    <property type="evidence" value="ECO:0007669"/>
    <property type="project" value="Ensembl"/>
</dbReference>
<dbReference type="GO" id="GO:0048660">
    <property type="term" value="P:regulation of smooth muscle cell proliferation"/>
    <property type="evidence" value="ECO:0007669"/>
    <property type="project" value="Ensembl"/>
</dbReference>
<dbReference type="GO" id="GO:0010996">
    <property type="term" value="P:response to auditory stimulus"/>
    <property type="evidence" value="ECO:0007669"/>
    <property type="project" value="Ensembl"/>
</dbReference>
<dbReference type="GO" id="GO:0051602">
    <property type="term" value="P:response to electrical stimulus"/>
    <property type="evidence" value="ECO:0007669"/>
    <property type="project" value="Ensembl"/>
</dbReference>
<dbReference type="GO" id="GO:0032355">
    <property type="term" value="P:response to estradiol"/>
    <property type="evidence" value="ECO:0007669"/>
    <property type="project" value="Ensembl"/>
</dbReference>
<dbReference type="GO" id="GO:0045471">
    <property type="term" value="P:response to ethanol"/>
    <property type="evidence" value="ECO:0007669"/>
    <property type="project" value="Ensembl"/>
</dbReference>
<dbReference type="GO" id="GO:0035094">
    <property type="term" value="P:response to nicotine"/>
    <property type="evidence" value="ECO:0007669"/>
    <property type="project" value="Ensembl"/>
</dbReference>
<dbReference type="GO" id="GO:0010193">
    <property type="term" value="P:response to ozone"/>
    <property type="evidence" value="ECO:0007669"/>
    <property type="project" value="Ensembl"/>
</dbReference>
<dbReference type="GO" id="GO:0032570">
    <property type="term" value="P:response to progesterone"/>
    <property type="evidence" value="ECO:0007669"/>
    <property type="project" value="Ensembl"/>
</dbReference>
<dbReference type="GO" id="GO:0060083">
    <property type="term" value="P:smooth muscle contraction involved in micturition"/>
    <property type="evidence" value="ECO:0007669"/>
    <property type="project" value="Ensembl"/>
</dbReference>
<dbReference type="GO" id="GO:0042713">
    <property type="term" value="P:sperm ejaculation"/>
    <property type="evidence" value="ECO:0007669"/>
    <property type="project" value="Ensembl"/>
</dbReference>
<dbReference type="GO" id="GO:0007217">
    <property type="term" value="P:tachykinin receptor signaling pathway"/>
    <property type="evidence" value="ECO:0000314"/>
    <property type="project" value="BHF-UCL"/>
</dbReference>
<dbReference type="CDD" id="cd16002">
    <property type="entry name" value="7tmA_NK1R"/>
    <property type="match status" value="1"/>
</dbReference>
<dbReference type="FunFam" id="1.20.1070.10:FF:000078">
    <property type="entry name" value="Neuromedin-K receptor"/>
    <property type="match status" value="1"/>
</dbReference>
<dbReference type="Gene3D" id="1.20.1070.10">
    <property type="entry name" value="Rhodopsin 7-helix transmembrane proteins"/>
    <property type="match status" value="1"/>
</dbReference>
<dbReference type="InterPro" id="IPR000276">
    <property type="entry name" value="GPCR_Rhodpsn"/>
</dbReference>
<dbReference type="InterPro" id="IPR017452">
    <property type="entry name" value="GPCR_Rhodpsn_7TM"/>
</dbReference>
<dbReference type="InterPro" id="IPR001681">
    <property type="entry name" value="Neurokn_rcpt"/>
</dbReference>
<dbReference type="InterPro" id="IPR000046">
    <property type="entry name" value="NK1_rcpt"/>
</dbReference>
<dbReference type="PANTHER" id="PTHR46925">
    <property type="entry name" value="G-PROTEIN COUPLED RECEPTOR TKR-1-RELATED"/>
    <property type="match status" value="1"/>
</dbReference>
<dbReference type="PANTHER" id="PTHR46925:SF4">
    <property type="entry name" value="SUBSTANCE-P RECEPTOR"/>
    <property type="match status" value="1"/>
</dbReference>
<dbReference type="Pfam" id="PF00001">
    <property type="entry name" value="7tm_1"/>
    <property type="match status" value="1"/>
</dbReference>
<dbReference type="PRINTS" id="PR00237">
    <property type="entry name" value="GPCRRHODOPSN"/>
</dbReference>
<dbReference type="PRINTS" id="PR01024">
    <property type="entry name" value="NEUROKININ1R"/>
</dbReference>
<dbReference type="PRINTS" id="PR00244">
    <property type="entry name" value="NEUROKININR"/>
</dbReference>
<dbReference type="SUPFAM" id="SSF81321">
    <property type="entry name" value="Family A G protein-coupled receptor-like"/>
    <property type="match status" value="1"/>
</dbReference>
<dbReference type="PROSITE" id="PS00237">
    <property type="entry name" value="G_PROTEIN_RECEP_F1_1"/>
    <property type="match status" value="1"/>
</dbReference>
<dbReference type="PROSITE" id="PS50262">
    <property type="entry name" value="G_PROTEIN_RECEP_F1_2"/>
    <property type="match status" value="1"/>
</dbReference>
<comment type="function">
    <text>This is a receptor for the tachykinin neuropeptide substance P. It is probably associated with G proteins that activate a phosphatidylinositol-calcium second messenger system. The rank order of affinity of this receptor to tachykinins is: substance P &gt; substance K &gt; neuromedin-K.</text>
</comment>
<comment type="subunit">
    <text evidence="1">Interacts with ARRB1.</text>
</comment>
<comment type="interaction">
    <interactant intactId="EBI-6655287">
        <id>P25103</id>
    </interactant>
    <interactant intactId="EBI-9083477">
        <id>Q9P0B6</id>
        <label>CCDC167</label>
    </interactant>
    <organismsDiffer>false</organismsDiffer>
    <experiments>3</experiments>
</comment>
<comment type="interaction">
    <interactant intactId="EBI-6655287">
        <id>P25103</id>
    </interactant>
    <interactant intactId="EBI-6655360">
        <id>PRO_0000033530</id>
        <label>TAC1</label>
        <dbReference type="UniProtKB" id="P20366"/>
    </interactant>
    <organismsDiffer>false</organismsDiffer>
    <experiments>2</experiments>
</comment>
<comment type="interaction">
    <interactant intactId="EBI-6655287">
        <id>P25103</id>
    </interactant>
    <interactant intactId="EBI-348587">
        <id>Q9BVK8</id>
        <label>TMEM147</label>
    </interactant>
    <organismsDiffer>false</organismsDiffer>
    <experiments>3</experiments>
</comment>
<comment type="subcellular location">
    <subcellularLocation>
        <location>Cell membrane</location>
        <topology>Multi-pass membrane protein</topology>
    </subcellularLocation>
</comment>
<comment type="alternative products">
    <event type="alternative splicing"/>
    <isoform>
        <id>P25103-1</id>
        <name>1</name>
        <sequence type="displayed"/>
    </isoform>
    <isoform>
        <id>P25103-3</id>
        <name>2</name>
        <sequence type="described" ref="VSP_053824"/>
    </isoform>
</comment>
<comment type="miscellaneous">
    <molecule>Isoform 2</molecule>
    <text evidence="10 11">In contrast to Fong et al. data (PubMed:1310144), isoform 2 is not detected by PCR in any of 24 human tissues examined including the placenta (PubMed:11864635).</text>
</comment>
<comment type="similarity">
    <text evidence="3">Belongs to the G-protein coupled receptor 1 family.</text>
</comment>
<comment type="online information" name="Wikipedia">
    <link uri="https://en.wikipedia.org/wiki/Tachykinin"/>
    <text>Tachykinin entry</text>
</comment>
<accession>P25103</accession>
<accession>A8K150</accession>
<gene>
    <name type="primary">TACR1</name>
    <name type="synonym">NK1R</name>
    <name type="synonym">TAC1R</name>
</gene>
<organism>
    <name type="scientific">Homo sapiens</name>
    <name type="common">Human</name>
    <dbReference type="NCBI Taxonomy" id="9606"/>
    <lineage>
        <taxon>Eukaryota</taxon>
        <taxon>Metazoa</taxon>
        <taxon>Chordata</taxon>
        <taxon>Craniata</taxon>
        <taxon>Vertebrata</taxon>
        <taxon>Euteleostomi</taxon>
        <taxon>Mammalia</taxon>
        <taxon>Eutheria</taxon>
        <taxon>Euarchontoglires</taxon>
        <taxon>Primates</taxon>
        <taxon>Haplorrhini</taxon>
        <taxon>Catarrhini</taxon>
        <taxon>Hominidae</taxon>
        <taxon>Homo</taxon>
    </lineage>
</organism>